<keyword id="KW-0143">Chaperone</keyword>
<keyword id="KW-0963">Cytoplasm</keyword>
<keyword id="KW-0539">Nucleus</keyword>
<keyword id="KW-1185">Reference proteome</keyword>
<keyword id="KW-0677">Repeat</keyword>
<keyword id="KW-0802">TPR repeat</keyword>
<organism>
    <name type="scientific">Schizosaccharomyces pombe (strain 972 / ATCC 24843)</name>
    <name type="common">Fission yeast</name>
    <dbReference type="NCBI Taxonomy" id="284812"/>
    <lineage>
        <taxon>Eukaryota</taxon>
        <taxon>Fungi</taxon>
        <taxon>Dikarya</taxon>
        <taxon>Ascomycota</taxon>
        <taxon>Taphrinomycotina</taxon>
        <taxon>Schizosaccharomycetes</taxon>
        <taxon>Schizosaccharomycetales</taxon>
        <taxon>Schizosaccharomycetaceae</taxon>
        <taxon>Schizosaccharomyces</taxon>
    </lineage>
</organism>
<evidence type="ECO:0000250" key="1"/>
<evidence type="ECO:0000269" key="2">
    <source>
    </source>
</evidence>
<evidence type="ECO:0000305" key="3"/>
<sequence length="358" mass="40531">MAGFQSSEVDPNTKNKNAEEMFNELNKVPFFMQSLEDVGDESENNVQLDALKALAYEGEPHEVAQNFREHGNECFASKRYKDAEEFYTKALAQKCGDKDIEIACYSNRAACNLLFENYRQVLNDCAQVLQRDSTHAKAYYRSAKALVALKRYDEAKECIRLCSLVHPNDPAILALSKELQKKSDDFEKRESEKKRVAQEKVIAAKTVLLALQERHIKTKTTEHPPDLGDAMISLSTFDDPKSELFFPTILLYPLVYQSDFVPSVSENCTPLELLKTVFQSPAPWDVHQLYNPDSLDVFATTDTLGLIKVGKNVPILKALTHPKVTLIDGLVQLHVVPHHLASDWISSWKKNKQENAKN</sequence>
<dbReference type="EMBL" id="CU329670">
    <property type="protein sequence ID" value="CAB16559.1"/>
    <property type="molecule type" value="Genomic_DNA"/>
</dbReference>
<dbReference type="PIR" id="T37805">
    <property type="entry name" value="T37805"/>
</dbReference>
<dbReference type="RefSeq" id="NP_594238.1">
    <property type="nucleotide sequence ID" value="NM_001019661.2"/>
</dbReference>
<dbReference type="SMR" id="O13754"/>
<dbReference type="BioGRID" id="278647">
    <property type="interactions" value="1"/>
</dbReference>
<dbReference type="FunCoup" id="O13754">
    <property type="interactions" value="940"/>
</dbReference>
<dbReference type="STRING" id="284812.O13754"/>
<dbReference type="PaxDb" id="4896-SPAC17A2.04c.1"/>
<dbReference type="EnsemblFungi" id="SPAC17A2.04c.1">
    <property type="protein sequence ID" value="SPAC17A2.04c.1:pep"/>
    <property type="gene ID" value="SPAC17A2.04c"/>
</dbReference>
<dbReference type="GeneID" id="2542172"/>
<dbReference type="KEGG" id="spo:2542172"/>
<dbReference type="PomBase" id="SPAC17A2.04c">
    <property type="gene designation" value="cns1"/>
</dbReference>
<dbReference type="VEuPathDB" id="FungiDB:SPAC17A2.04c"/>
<dbReference type="eggNOG" id="KOG0551">
    <property type="taxonomic scope" value="Eukaryota"/>
</dbReference>
<dbReference type="HOGENOM" id="CLU_040446_1_0_1"/>
<dbReference type="InParanoid" id="O13754"/>
<dbReference type="OMA" id="WRAAQCA"/>
<dbReference type="PhylomeDB" id="O13754"/>
<dbReference type="PRO" id="PR:O13754"/>
<dbReference type="Proteomes" id="UP000002485">
    <property type="component" value="Chromosome I"/>
</dbReference>
<dbReference type="GO" id="GO:0005829">
    <property type="term" value="C:cytosol"/>
    <property type="evidence" value="ECO:0007005"/>
    <property type="project" value="PomBase"/>
</dbReference>
<dbReference type="GO" id="GO:0005634">
    <property type="term" value="C:nucleus"/>
    <property type="evidence" value="ECO:0007005"/>
    <property type="project" value="PomBase"/>
</dbReference>
<dbReference type="GO" id="GO:0030544">
    <property type="term" value="F:Hsp70 protein binding"/>
    <property type="evidence" value="ECO:0000318"/>
    <property type="project" value="GO_Central"/>
</dbReference>
<dbReference type="GO" id="GO:0051879">
    <property type="term" value="F:Hsp90 protein binding"/>
    <property type="evidence" value="ECO:0000318"/>
    <property type="project" value="GO_Central"/>
</dbReference>
<dbReference type="GO" id="GO:0006457">
    <property type="term" value="P:protein folding"/>
    <property type="evidence" value="ECO:0000318"/>
    <property type="project" value="GO_Central"/>
</dbReference>
<dbReference type="CDD" id="cd21381">
    <property type="entry name" value="CTWD_TTC4"/>
    <property type="match status" value="1"/>
</dbReference>
<dbReference type="Gene3D" id="1.25.40.10">
    <property type="entry name" value="Tetratricopeptide repeat domain"/>
    <property type="match status" value="1"/>
</dbReference>
<dbReference type="InterPro" id="IPR044059">
    <property type="entry name" value="Csn1/TTC4_wheel"/>
</dbReference>
<dbReference type="InterPro" id="IPR011990">
    <property type="entry name" value="TPR-like_helical_dom_sf"/>
</dbReference>
<dbReference type="InterPro" id="IPR019734">
    <property type="entry name" value="TPR_rpt"/>
</dbReference>
<dbReference type="PANTHER" id="PTHR46035">
    <property type="entry name" value="TETRATRICOPEPTIDE REPEAT PROTEIN 4"/>
    <property type="match status" value="1"/>
</dbReference>
<dbReference type="PANTHER" id="PTHR46035:SF1">
    <property type="entry name" value="TETRATRICOPEPTIDE REPEAT PROTEIN 4"/>
    <property type="match status" value="1"/>
</dbReference>
<dbReference type="Pfam" id="PF14559">
    <property type="entry name" value="TPR_19"/>
    <property type="match status" value="1"/>
</dbReference>
<dbReference type="Pfam" id="PF18972">
    <property type="entry name" value="Wheel"/>
    <property type="match status" value="1"/>
</dbReference>
<dbReference type="SMART" id="SM00028">
    <property type="entry name" value="TPR"/>
    <property type="match status" value="3"/>
</dbReference>
<dbReference type="SUPFAM" id="SSF48452">
    <property type="entry name" value="TPR-like"/>
    <property type="match status" value="1"/>
</dbReference>
<dbReference type="PROSITE" id="PS50293">
    <property type="entry name" value="TPR_REGION"/>
    <property type="match status" value="1"/>
</dbReference>
<feature type="chain" id="PRO_0000363376" description="Hsp70/Hsp90 co-chaperone cns1">
    <location>
        <begin position="1"/>
        <end position="358"/>
    </location>
</feature>
<feature type="repeat" description="TPR 1">
    <location>
        <begin position="64"/>
        <end position="97"/>
    </location>
</feature>
<feature type="repeat" description="TPR 2">
    <location>
        <begin position="102"/>
        <end position="135"/>
    </location>
</feature>
<feature type="repeat" description="TPR 3">
    <location>
        <begin position="136"/>
        <end position="169"/>
    </location>
</feature>
<feature type="repeat" description="TPR 4">
    <location>
        <begin position="221"/>
        <end position="255"/>
    </location>
</feature>
<gene>
    <name type="primary">cns1</name>
    <name type="ORF">SPAC17A2.04c</name>
</gene>
<name>CNS1_SCHPO</name>
<accession>O13754</accession>
<comment type="function">
    <text evidence="1">Co-chaperone that binds to the molecular chaperones Hsp90 and Hsp70. Stimulates Hsp70 ATPase activity, but not Hsp90 ATPase activity. Involved in only a subset of Hsp90 functions (By similarity).</text>
</comment>
<comment type="subunit">
    <text evidence="1">Monomer. Component of Hsp70 and Hsp90 chaperone complexes (By similarity).</text>
</comment>
<comment type="subcellular location">
    <subcellularLocation>
        <location evidence="2">Cytoplasm</location>
    </subcellularLocation>
    <subcellularLocation>
        <location evidence="2">Nucleus</location>
    </subcellularLocation>
</comment>
<comment type="similarity">
    <text evidence="3">Belongs to the TTC4 family.</text>
</comment>
<protein>
    <recommendedName>
        <fullName>Hsp70/Hsp90 co-chaperone cns1</fullName>
    </recommendedName>
</protein>
<proteinExistence type="inferred from homology"/>
<reference key="1">
    <citation type="journal article" date="2002" name="Nature">
        <title>The genome sequence of Schizosaccharomyces pombe.</title>
        <authorList>
            <person name="Wood V."/>
            <person name="Gwilliam R."/>
            <person name="Rajandream M.A."/>
            <person name="Lyne M.H."/>
            <person name="Lyne R."/>
            <person name="Stewart A."/>
            <person name="Sgouros J.G."/>
            <person name="Peat N."/>
            <person name="Hayles J."/>
            <person name="Baker S.G."/>
            <person name="Basham D."/>
            <person name="Bowman S."/>
            <person name="Brooks K."/>
            <person name="Brown D."/>
            <person name="Brown S."/>
            <person name="Chillingworth T."/>
            <person name="Churcher C.M."/>
            <person name="Collins M."/>
            <person name="Connor R."/>
            <person name="Cronin A."/>
            <person name="Davis P."/>
            <person name="Feltwell T."/>
            <person name="Fraser A."/>
            <person name="Gentles S."/>
            <person name="Goble A."/>
            <person name="Hamlin N."/>
            <person name="Harris D.E."/>
            <person name="Hidalgo J."/>
            <person name="Hodgson G."/>
            <person name="Holroyd S."/>
            <person name="Hornsby T."/>
            <person name="Howarth S."/>
            <person name="Huckle E.J."/>
            <person name="Hunt S."/>
            <person name="Jagels K."/>
            <person name="James K.D."/>
            <person name="Jones L."/>
            <person name="Jones M."/>
            <person name="Leather S."/>
            <person name="McDonald S."/>
            <person name="McLean J."/>
            <person name="Mooney P."/>
            <person name="Moule S."/>
            <person name="Mungall K.L."/>
            <person name="Murphy L.D."/>
            <person name="Niblett D."/>
            <person name="Odell C."/>
            <person name="Oliver K."/>
            <person name="O'Neil S."/>
            <person name="Pearson D."/>
            <person name="Quail M.A."/>
            <person name="Rabbinowitsch E."/>
            <person name="Rutherford K.M."/>
            <person name="Rutter S."/>
            <person name="Saunders D."/>
            <person name="Seeger K."/>
            <person name="Sharp S."/>
            <person name="Skelton J."/>
            <person name="Simmonds M.N."/>
            <person name="Squares R."/>
            <person name="Squares S."/>
            <person name="Stevens K."/>
            <person name="Taylor K."/>
            <person name="Taylor R.G."/>
            <person name="Tivey A."/>
            <person name="Walsh S.V."/>
            <person name="Warren T."/>
            <person name="Whitehead S."/>
            <person name="Woodward J.R."/>
            <person name="Volckaert G."/>
            <person name="Aert R."/>
            <person name="Robben J."/>
            <person name="Grymonprez B."/>
            <person name="Weltjens I."/>
            <person name="Vanstreels E."/>
            <person name="Rieger M."/>
            <person name="Schaefer M."/>
            <person name="Mueller-Auer S."/>
            <person name="Gabel C."/>
            <person name="Fuchs M."/>
            <person name="Duesterhoeft A."/>
            <person name="Fritzc C."/>
            <person name="Holzer E."/>
            <person name="Moestl D."/>
            <person name="Hilbert H."/>
            <person name="Borzym K."/>
            <person name="Langer I."/>
            <person name="Beck A."/>
            <person name="Lehrach H."/>
            <person name="Reinhardt R."/>
            <person name="Pohl T.M."/>
            <person name="Eger P."/>
            <person name="Zimmermann W."/>
            <person name="Wedler H."/>
            <person name="Wambutt R."/>
            <person name="Purnelle B."/>
            <person name="Goffeau A."/>
            <person name="Cadieu E."/>
            <person name="Dreano S."/>
            <person name="Gloux S."/>
            <person name="Lelaure V."/>
            <person name="Mottier S."/>
            <person name="Galibert F."/>
            <person name="Aves S.J."/>
            <person name="Xiang Z."/>
            <person name="Hunt C."/>
            <person name="Moore K."/>
            <person name="Hurst S.M."/>
            <person name="Lucas M."/>
            <person name="Rochet M."/>
            <person name="Gaillardin C."/>
            <person name="Tallada V.A."/>
            <person name="Garzon A."/>
            <person name="Thode G."/>
            <person name="Daga R.R."/>
            <person name="Cruzado L."/>
            <person name="Jimenez J."/>
            <person name="Sanchez M."/>
            <person name="del Rey F."/>
            <person name="Benito J."/>
            <person name="Dominguez A."/>
            <person name="Revuelta J.L."/>
            <person name="Moreno S."/>
            <person name="Armstrong J."/>
            <person name="Forsburg S.L."/>
            <person name="Cerutti L."/>
            <person name="Lowe T."/>
            <person name="McCombie W.R."/>
            <person name="Paulsen I."/>
            <person name="Potashkin J."/>
            <person name="Shpakovski G.V."/>
            <person name="Ussery D."/>
            <person name="Barrell B.G."/>
            <person name="Nurse P."/>
        </authorList>
    </citation>
    <scope>NUCLEOTIDE SEQUENCE [LARGE SCALE GENOMIC DNA]</scope>
    <source>
        <strain>972 / ATCC 24843</strain>
    </source>
</reference>
<reference key="2">
    <citation type="journal article" date="2006" name="Nat. Biotechnol.">
        <title>ORFeome cloning and global analysis of protein localization in the fission yeast Schizosaccharomyces pombe.</title>
        <authorList>
            <person name="Matsuyama A."/>
            <person name="Arai R."/>
            <person name="Yashiroda Y."/>
            <person name="Shirai A."/>
            <person name="Kamata A."/>
            <person name="Sekido S."/>
            <person name="Kobayashi Y."/>
            <person name="Hashimoto A."/>
            <person name="Hamamoto M."/>
            <person name="Hiraoka Y."/>
            <person name="Horinouchi S."/>
            <person name="Yoshida M."/>
        </authorList>
    </citation>
    <scope>SUBCELLULAR LOCATION [LARGE SCALE ANALYSIS]</scope>
</reference>